<accession>A9A2G6</accession>
<feature type="chain" id="PRO_0000453090" description="3-hydroxypropionate--CoA ligase [ADP-forming]">
    <location>
        <begin position="1"/>
        <end position="705"/>
    </location>
</feature>
<feature type="domain" description="ATP-grasp" evidence="1">
    <location>
        <begin position="25"/>
        <end position="61"/>
    </location>
</feature>
<feature type="binding site" evidence="1">
    <location>
        <begin position="51"/>
        <end position="61"/>
    </location>
    <ligand>
        <name>ATP</name>
        <dbReference type="ChEBI" id="CHEBI:30616"/>
    </ligand>
</feature>
<name>HPCAL_NITMS</name>
<sequence>MAAVKKIFDEIIETDHKVITEESSKSILKNYGVKVPPYALVTSAEEAAKEAKKIGFPLVMKVVSPQILHKTDVGGVKVGLDNVADVKKTFTDMYGRLSKKKGVNVKGILLEKMVPKGVELIVGIQNDSQFGPIIMVGMGGIMTEVMKDVAFRMLPITTSDAKSMLNELKGSKLLKGFRGSEPIDTNLVAKMLVNIGKLGVENADYINSIDFNPVIVYPKSHYVVDAKIILNKEKKKNSISKAKPSITDMETFFTPKSVALVGASASPGKIGNSILDSLVNYDFKGKVYPINPKADKIFGQKCYPSVADIPGKVDLVVVSVDLSMTPPVLEDCAKKGVHSVVIVSGGGKELGGERAAYEAEVARLSKKHKIRIIGPNCIGMFNAANRLDCAFQGQERMVRSKLGPVAFFSQSGTMGISMLESADTFGLSKMISFGNRSDVDEADMIWYAANDPQTKVIGLYVEGFGDGRKFINVAKRVMKEKKKPIVIWKSGRTAAGAKQAASHTGSLGGSNAIIMGAFKQAGIISVDSYQELAGVLKALAWQPAAKGNKVAMTSNGAGPMIGGIDQLEKFGLAIGKLSPKLLKKMKSRFPPAVPIHNGNPADVGGGATADDYQFVIQQFMDEKNIDIAMPWFVFQDDPLEETIVDHLAGFQKKAKKPLLCGGNGGPYTEKMIKLIEKHNVPVYQDLRTWVAAASALHQWGKISKK</sequence>
<protein>
    <recommendedName>
        <fullName evidence="4">3-hydroxypropionate--CoA ligase [ADP-forming]</fullName>
        <ecNumber evidence="2">6.2.1.-</ecNumber>
    </recommendedName>
    <alternativeName>
        <fullName evidence="4">3-hydroxypropionyl-coenzyme A synthetase [ADP-forming]</fullName>
        <shortName evidence="3">3-hydroxypropionyl-CoA synthetase [ADP-forming]</shortName>
    </alternativeName>
</protein>
<comment type="function">
    <text evidence="2">Involved in thaumarchaeal hydroxypropionate/hydroxybutyrate (HP/HB) cycle, a modified version of the autotrophic HP/HB cycle of Crenarchaeota. Catalyzes the formation of 3-hydroxypropionyl-CoA, ADP and phosphate from 3-hydroxypropionate, coenzyme A (CoA) and ATP. Can also use 4-hydroxybutyrate, propionate and butyrate, with poor catalytic efficiency.</text>
</comment>
<comment type="catalytic activity">
    <reaction evidence="2">
        <text>3-hydroxypropanoate + ATP + CoA = 3-hydroxypropanoyl-CoA + ADP + phosphate</text>
        <dbReference type="Rhea" id="RHEA:67136"/>
        <dbReference type="ChEBI" id="CHEBI:16510"/>
        <dbReference type="ChEBI" id="CHEBI:30616"/>
        <dbReference type="ChEBI" id="CHEBI:43474"/>
        <dbReference type="ChEBI" id="CHEBI:57287"/>
        <dbReference type="ChEBI" id="CHEBI:58528"/>
        <dbReference type="ChEBI" id="CHEBI:456216"/>
    </reaction>
</comment>
<comment type="cofactor">
    <cofactor evidence="2">
        <name>Mg(2+)</name>
        <dbReference type="ChEBI" id="CHEBI:18420"/>
    </cofactor>
    <cofactor evidence="2">
        <name>Mn(2+)</name>
        <dbReference type="ChEBI" id="CHEBI:29035"/>
    </cofactor>
    <text evidence="2">No activity with Ni(2+), Co(2+) and Ca(2+).</text>
</comment>
<comment type="biophysicochemical properties">
    <kinetics>
        <KM evidence="2">1.2 mM for 3-hydroxypropionate</KM>
        <KM evidence="2">5.6 mM for 4-hydroxybutyrate</KM>
        <KM evidence="2">17 mM for propionate</KM>
        <KM evidence="2">12.4 mM for butyrate</KM>
        <KM evidence="2">0.6 mM for ATP</KM>
        <KM evidence="2">0.16 mM for CoA</KM>
        <Vmax evidence="2">0.59 umol/min/mg enzyme with 3-hydroxypropionate as substrate</Vmax>
        <Vmax evidence="2">0.48 umol/min/mg enzyme with 4-hydroxybutyrate as substrate</Vmax>
        <Vmax evidence="2">0.5 umol/min/mg enzyme with propionate as substrate</Vmax>
        <Vmax evidence="2">0.54 umol/min/mg enzyme with butyrate as substrate</Vmax>
        <Vmax evidence="2">0.59 umol/min/mg enzyme with ATP as substrate</Vmax>
        <Vmax evidence="2">0.6 umol/min/mg enzyme with CoA as substrate</Vmax>
    </kinetics>
</comment>
<comment type="similarity">
    <text evidence="4">In the N-terminal section; belongs to the acetate CoA ligase beta subunit family.</text>
</comment>
<comment type="similarity">
    <text evidence="4">In the C-terminal section; belongs to the acetate CoA ligase alpha subunit family.</text>
</comment>
<dbReference type="EC" id="6.2.1.-" evidence="2"/>
<dbReference type="EMBL" id="CP000866">
    <property type="protein sequence ID" value="ABX13205.1"/>
    <property type="molecule type" value="Genomic_DNA"/>
</dbReference>
<dbReference type="RefSeq" id="WP_012215692.1">
    <property type="nucleotide sequence ID" value="NC_010085.1"/>
</dbReference>
<dbReference type="SMR" id="A9A2G6"/>
<dbReference type="STRING" id="436308.Nmar_1309"/>
<dbReference type="EnsemblBacteria" id="ABX13205">
    <property type="protein sequence ID" value="ABX13205"/>
    <property type="gene ID" value="Nmar_1309"/>
</dbReference>
<dbReference type="GeneID" id="5773360"/>
<dbReference type="KEGG" id="nmr:Nmar_1309"/>
<dbReference type="eggNOG" id="arCOG01338">
    <property type="taxonomic scope" value="Archaea"/>
</dbReference>
<dbReference type="eggNOG" id="arCOG01340">
    <property type="taxonomic scope" value="Archaea"/>
</dbReference>
<dbReference type="HOGENOM" id="CLU_007415_2_2_2"/>
<dbReference type="InParanoid" id="A9A2G6"/>
<dbReference type="OrthoDB" id="18103at2157"/>
<dbReference type="PhylomeDB" id="A9A2G6"/>
<dbReference type="Proteomes" id="UP000000792">
    <property type="component" value="Chromosome"/>
</dbReference>
<dbReference type="GO" id="GO:0005524">
    <property type="term" value="F:ATP binding"/>
    <property type="evidence" value="ECO:0007669"/>
    <property type="project" value="UniProtKB-KW"/>
</dbReference>
<dbReference type="GO" id="GO:0016874">
    <property type="term" value="F:ligase activity"/>
    <property type="evidence" value="ECO:0007669"/>
    <property type="project" value="UniProtKB-KW"/>
</dbReference>
<dbReference type="GO" id="GO:0046872">
    <property type="term" value="F:metal ion binding"/>
    <property type="evidence" value="ECO:0007669"/>
    <property type="project" value="UniProtKB-KW"/>
</dbReference>
<dbReference type="FunFam" id="3.30.1490.20:FF:000020">
    <property type="entry name" value="Protein lysine acetyltransferase"/>
    <property type="match status" value="1"/>
</dbReference>
<dbReference type="Gene3D" id="3.30.1490.20">
    <property type="entry name" value="ATP-grasp fold, A domain"/>
    <property type="match status" value="1"/>
</dbReference>
<dbReference type="Gene3D" id="3.30.470.20">
    <property type="entry name" value="ATP-grasp fold, B domain"/>
    <property type="match status" value="1"/>
</dbReference>
<dbReference type="Gene3D" id="3.40.50.720">
    <property type="entry name" value="NAD(P)-binding Rossmann-like Domain"/>
    <property type="match status" value="1"/>
</dbReference>
<dbReference type="Gene3D" id="3.40.50.261">
    <property type="entry name" value="Succinyl-CoA synthetase domains"/>
    <property type="match status" value="2"/>
</dbReference>
<dbReference type="InterPro" id="IPR053579">
    <property type="entry name" value="3HP/4HB_CoA_Ligase"/>
</dbReference>
<dbReference type="InterPro" id="IPR051538">
    <property type="entry name" value="Acyl-CoA_Synth/Transferase"/>
</dbReference>
<dbReference type="InterPro" id="IPR011761">
    <property type="entry name" value="ATP-grasp"/>
</dbReference>
<dbReference type="InterPro" id="IPR013815">
    <property type="entry name" value="ATP_grasp_subdomain_1"/>
</dbReference>
<dbReference type="InterPro" id="IPR003781">
    <property type="entry name" value="CoA-bd"/>
</dbReference>
<dbReference type="InterPro" id="IPR036291">
    <property type="entry name" value="NAD(P)-bd_dom_sf"/>
</dbReference>
<dbReference type="InterPro" id="IPR032875">
    <property type="entry name" value="Succ_CoA_lig_flav_dom"/>
</dbReference>
<dbReference type="InterPro" id="IPR016102">
    <property type="entry name" value="Succinyl-CoA_synth-like"/>
</dbReference>
<dbReference type="NCBIfam" id="NF045492">
    <property type="entry name" value="HydPropCoALig"/>
    <property type="match status" value="1"/>
</dbReference>
<dbReference type="PANTHER" id="PTHR43334:SF1">
    <property type="entry name" value="3-HYDROXYPROPIONATE--COA LIGASE [ADP-FORMING]"/>
    <property type="match status" value="1"/>
</dbReference>
<dbReference type="PANTHER" id="PTHR43334">
    <property type="entry name" value="ACETATE--COA LIGASE [ADP-FORMING]"/>
    <property type="match status" value="1"/>
</dbReference>
<dbReference type="Pfam" id="PF13549">
    <property type="entry name" value="ATP-grasp_5"/>
    <property type="match status" value="1"/>
</dbReference>
<dbReference type="Pfam" id="PF13380">
    <property type="entry name" value="CoA_binding_2"/>
    <property type="match status" value="1"/>
</dbReference>
<dbReference type="Pfam" id="PF13607">
    <property type="entry name" value="Succ_CoA_lig"/>
    <property type="match status" value="1"/>
</dbReference>
<dbReference type="SMART" id="SM00881">
    <property type="entry name" value="CoA_binding"/>
    <property type="match status" value="1"/>
</dbReference>
<dbReference type="SUPFAM" id="SSF56059">
    <property type="entry name" value="Glutathione synthetase ATP-binding domain-like"/>
    <property type="match status" value="1"/>
</dbReference>
<dbReference type="SUPFAM" id="SSF51735">
    <property type="entry name" value="NAD(P)-binding Rossmann-fold domains"/>
    <property type="match status" value="1"/>
</dbReference>
<dbReference type="SUPFAM" id="SSF52210">
    <property type="entry name" value="Succinyl-CoA synthetase domains"/>
    <property type="match status" value="2"/>
</dbReference>
<dbReference type="PROSITE" id="PS50975">
    <property type="entry name" value="ATP_GRASP"/>
    <property type="match status" value="1"/>
</dbReference>
<organism>
    <name type="scientific">Nitrosopumilus maritimus (strain SCM1)</name>
    <dbReference type="NCBI Taxonomy" id="436308"/>
    <lineage>
        <taxon>Archaea</taxon>
        <taxon>Nitrososphaerota</taxon>
        <taxon>Nitrososphaeria</taxon>
        <taxon>Nitrosopumilales</taxon>
        <taxon>Nitrosopumilaceae</taxon>
        <taxon>Nitrosopumilus</taxon>
    </lineage>
</organism>
<evidence type="ECO:0000255" key="1">
    <source>
        <dbReference type="PROSITE-ProRule" id="PRU00409"/>
    </source>
</evidence>
<evidence type="ECO:0000269" key="2">
    <source>
    </source>
</evidence>
<evidence type="ECO:0000303" key="3">
    <source>
    </source>
</evidence>
<evidence type="ECO:0000305" key="4"/>
<evidence type="ECO:0000312" key="5">
    <source>
        <dbReference type="EMBL" id="ABX13205.1"/>
    </source>
</evidence>
<keyword id="KW-0067">ATP-binding</keyword>
<keyword id="KW-0436">Ligase</keyword>
<keyword id="KW-0460">Magnesium</keyword>
<keyword id="KW-0464">Manganese</keyword>
<keyword id="KW-0479">Metal-binding</keyword>
<keyword id="KW-0547">Nucleotide-binding</keyword>
<keyword id="KW-1185">Reference proteome</keyword>
<gene>
    <name evidence="5" type="ordered locus">Nmar_1309</name>
</gene>
<proteinExistence type="evidence at protein level"/>
<reference key="1">
    <citation type="journal article" date="2010" name="Proc. Natl. Acad. Sci. U.S.A.">
        <title>Nitrosopumilus maritimus genome reveals unique mechanisms for nitrification and autotrophy in globally distributed marine crenarchaea.</title>
        <authorList>
            <person name="Walker C.B."/>
            <person name="de la Torre J.R."/>
            <person name="Klotz M.G."/>
            <person name="Urakawa H."/>
            <person name="Pinel N."/>
            <person name="Arp D.J."/>
            <person name="Brochier-Armanet C."/>
            <person name="Chain P.S."/>
            <person name="Chan P.P."/>
            <person name="Gollabgir A."/>
            <person name="Hemp J."/>
            <person name="Hugler M."/>
            <person name="Karr E.A."/>
            <person name="Konneke M."/>
            <person name="Shin M."/>
            <person name="Lawton T.J."/>
            <person name="Lowe T."/>
            <person name="Martens-Habbena W."/>
            <person name="Sayavedra-Soto L.A."/>
            <person name="Lang D."/>
            <person name="Sievert S.M."/>
            <person name="Rosenzweig A.C."/>
            <person name="Manning G."/>
            <person name="Stahl D.A."/>
        </authorList>
    </citation>
    <scope>NUCLEOTIDE SEQUENCE [LARGE SCALE GENOMIC DNA]</scope>
    <source>
        <strain>SCM1</strain>
    </source>
</reference>
<reference key="2">
    <citation type="journal article" date="2014" name="Proc. Natl. Acad. Sci. U.S.A.">
        <title>Ammonia-oxidizing archaea use the most energy-efficient aerobic pathway for CO2 fixation.</title>
        <authorList>
            <person name="Koenneke M."/>
            <person name="Schubert D.M."/>
            <person name="Brown P.C."/>
            <person name="Huegler M."/>
            <person name="Standfest S."/>
            <person name="Schwander T."/>
            <person name="Schada von Borzyskowski L."/>
            <person name="Erb T.J."/>
            <person name="Stahl D.A."/>
            <person name="Berg I.A."/>
        </authorList>
    </citation>
    <scope>FUNCTION</scope>
    <scope>CATALYTIC ACTIVITY</scope>
    <scope>COFACTOR</scope>
    <scope>BIOPHYSICOCHEMICAL PROPERTIES</scope>
    <source>
        <strain>SCM1</strain>
    </source>
</reference>